<proteinExistence type="inferred from homology"/>
<comment type="function">
    <text evidence="1">This protein is involved in the repair of mismatches in DNA. It is possible that it carries out the mismatch recognition step. This protein has a weak ATPase activity.</text>
</comment>
<comment type="similarity">
    <text evidence="1">Belongs to the DNA mismatch repair MutS family.</text>
</comment>
<gene>
    <name evidence="1" type="primary">mutS</name>
    <name type="ordered locus">Rpic_0993</name>
</gene>
<accession>B2U9E4</accession>
<protein>
    <recommendedName>
        <fullName evidence="1">DNA mismatch repair protein MutS</fullName>
    </recommendedName>
</protein>
<evidence type="ECO:0000255" key="1">
    <source>
        <dbReference type="HAMAP-Rule" id="MF_00096"/>
    </source>
</evidence>
<name>MUTS_RALPJ</name>
<sequence>MAEHSAPVLEIDPKYGPFDKHTPMMQQYLRLKSGHPNTLVFYRMGDFYELFFEDAEKASRLLDITLTARGSSNGHPIRMAGIPFHAAEQYLAKLVKLGESVAICEQIGDPATAKGPVERKVVRVVTPGTLTDAALLSDKINNHLLAIAHLPAKRGAAPLIGLAWLNLVGGELRVMECSPDQLDRELERIRPAEVLADDATLNTIQVDVARTRLPDWHFDVEAGTRRLREQLGVASLVAFGAETLTAALAAAGALLNYAAATQGQSLRHVIGLTVEHESEFIGLDTATRRNLELTETLRGQESPTLFSLLDTCATSMGSRLLRHWLHHPLRDRAIPQARQQAIEVLLGGDWQTLRSTLRTLSDVERITGRLALLSARPRDLSSLRDTLARLPEIREELPQSDAAPLLIELYAALTLPEDAHALLQRAVMAEPAAMVRDGGVIARGYDADLDELRDISENCGQFLVDLEARERERTGIANLRVEYNRVHGFYIEVTNGQAAKVPDDYRRRQTLKNAERYITPELKAFEDKALSAQDRALSREKLLYEELLQKLLPHLAEFKRIAAALAQADVLATLAERAHALSWSRPTLTDAPGIELTRARHPVVEQQVEQFVANDCMLQEARKLLLITGPNMGGKSTFMRQTALVVLLAYVGAFVPAEAAVIGPIDRIFTRIGAADDLAGGRSTFMVEMTEAAAILHRATPNSLVLMDEIGRGTSTFDGLALAWAIARHLLSHNRSHTLFATHYFELTQLPQEFAQAANVHLSAVEHGDGIVFLHAVQEGPASQSYGLQVAQLAGVPQPVIRAARKRLAWLEQHSADTGATPQLDLFALAADMPIVDEGDADAETPDSALADALAGIDPDDMTPREALDALYRLKALASPAA</sequence>
<keyword id="KW-0067">ATP-binding</keyword>
<keyword id="KW-0227">DNA damage</keyword>
<keyword id="KW-0234">DNA repair</keyword>
<keyword id="KW-0238">DNA-binding</keyword>
<keyword id="KW-0547">Nucleotide-binding</keyword>
<dbReference type="EMBL" id="CP001068">
    <property type="protein sequence ID" value="ACD26141.1"/>
    <property type="molecule type" value="Genomic_DNA"/>
</dbReference>
<dbReference type="SMR" id="B2U9E4"/>
<dbReference type="STRING" id="402626.Rpic_0993"/>
<dbReference type="KEGG" id="rpi:Rpic_0993"/>
<dbReference type="PATRIC" id="fig|402626.5.peg.2196"/>
<dbReference type="eggNOG" id="COG0249">
    <property type="taxonomic scope" value="Bacteria"/>
</dbReference>
<dbReference type="HOGENOM" id="CLU_002472_4_0_4"/>
<dbReference type="GO" id="GO:0005829">
    <property type="term" value="C:cytosol"/>
    <property type="evidence" value="ECO:0007669"/>
    <property type="project" value="TreeGrafter"/>
</dbReference>
<dbReference type="GO" id="GO:0005524">
    <property type="term" value="F:ATP binding"/>
    <property type="evidence" value="ECO:0007669"/>
    <property type="project" value="UniProtKB-UniRule"/>
</dbReference>
<dbReference type="GO" id="GO:0140664">
    <property type="term" value="F:ATP-dependent DNA damage sensor activity"/>
    <property type="evidence" value="ECO:0007669"/>
    <property type="project" value="InterPro"/>
</dbReference>
<dbReference type="GO" id="GO:0003684">
    <property type="term" value="F:damaged DNA binding"/>
    <property type="evidence" value="ECO:0007669"/>
    <property type="project" value="UniProtKB-UniRule"/>
</dbReference>
<dbReference type="GO" id="GO:0030983">
    <property type="term" value="F:mismatched DNA binding"/>
    <property type="evidence" value="ECO:0007669"/>
    <property type="project" value="InterPro"/>
</dbReference>
<dbReference type="GO" id="GO:0006298">
    <property type="term" value="P:mismatch repair"/>
    <property type="evidence" value="ECO:0007669"/>
    <property type="project" value="UniProtKB-UniRule"/>
</dbReference>
<dbReference type="CDD" id="cd03284">
    <property type="entry name" value="ABC_MutS1"/>
    <property type="match status" value="1"/>
</dbReference>
<dbReference type="FunFam" id="1.10.1420.10:FF:000001">
    <property type="entry name" value="DNA mismatch repair protein MutS"/>
    <property type="match status" value="1"/>
</dbReference>
<dbReference type="FunFam" id="3.40.1170.10:FF:000001">
    <property type="entry name" value="DNA mismatch repair protein MutS"/>
    <property type="match status" value="1"/>
</dbReference>
<dbReference type="FunFam" id="3.40.50.300:FF:000870">
    <property type="entry name" value="MutS protein homolog 4"/>
    <property type="match status" value="1"/>
</dbReference>
<dbReference type="Gene3D" id="1.10.1420.10">
    <property type="match status" value="2"/>
</dbReference>
<dbReference type="Gene3D" id="6.10.140.430">
    <property type="match status" value="1"/>
</dbReference>
<dbReference type="Gene3D" id="3.40.1170.10">
    <property type="entry name" value="DNA repair protein MutS, domain I"/>
    <property type="match status" value="1"/>
</dbReference>
<dbReference type="Gene3D" id="3.30.420.110">
    <property type="entry name" value="MutS, connector domain"/>
    <property type="match status" value="1"/>
</dbReference>
<dbReference type="Gene3D" id="3.40.50.300">
    <property type="entry name" value="P-loop containing nucleotide triphosphate hydrolases"/>
    <property type="match status" value="1"/>
</dbReference>
<dbReference type="HAMAP" id="MF_00096">
    <property type="entry name" value="MutS"/>
    <property type="match status" value="1"/>
</dbReference>
<dbReference type="InterPro" id="IPR005748">
    <property type="entry name" value="DNA_mismatch_repair_MutS"/>
</dbReference>
<dbReference type="InterPro" id="IPR007695">
    <property type="entry name" value="DNA_mismatch_repair_MutS-lik_N"/>
</dbReference>
<dbReference type="InterPro" id="IPR017261">
    <property type="entry name" value="DNA_mismatch_repair_MutS/MSH"/>
</dbReference>
<dbReference type="InterPro" id="IPR000432">
    <property type="entry name" value="DNA_mismatch_repair_MutS_C"/>
</dbReference>
<dbReference type="InterPro" id="IPR007861">
    <property type="entry name" value="DNA_mismatch_repair_MutS_clamp"/>
</dbReference>
<dbReference type="InterPro" id="IPR007696">
    <property type="entry name" value="DNA_mismatch_repair_MutS_core"/>
</dbReference>
<dbReference type="InterPro" id="IPR016151">
    <property type="entry name" value="DNA_mismatch_repair_MutS_N"/>
</dbReference>
<dbReference type="InterPro" id="IPR036187">
    <property type="entry name" value="DNA_mismatch_repair_MutS_sf"/>
</dbReference>
<dbReference type="InterPro" id="IPR007860">
    <property type="entry name" value="DNA_mmatch_repair_MutS_con_dom"/>
</dbReference>
<dbReference type="InterPro" id="IPR045076">
    <property type="entry name" value="MutS"/>
</dbReference>
<dbReference type="InterPro" id="IPR036678">
    <property type="entry name" value="MutS_con_dom_sf"/>
</dbReference>
<dbReference type="InterPro" id="IPR027417">
    <property type="entry name" value="P-loop_NTPase"/>
</dbReference>
<dbReference type="NCBIfam" id="TIGR01070">
    <property type="entry name" value="mutS1"/>
    <property type="match status" value="1"/>
</dbReference>
<dbReference type="NCBIfam" id="NF003810">
    <property type="entry name" value="PRK05399.1"/>
    <property type="match status" value="1"/>
</dbReference>
<dbReference type="PANTHER" id="PTHR11361:SF34">
    <property type="entry name" value="DNA MISMATCH REPAIR PROTEIN MSH1, MITOCHONDRIAL"/>
    <property type="match status" value="1"/>
</dbReference>
<dbReference type="PANTHER" id="PTHR11361">
    <property type="entry name" value="DNA MISMATCH REPAIR PROTEIN MUTS FAMILY MEMBER"/>
    <property type="match status" value="1"/>
</dbReference>
<dbReference type="Pfam" id="PF01624">
    <property type="entry name" value="MutS_I"/>
    <property type="match status" value="1"/>
</dbReference>
<dbReference type="Pfam" id="PF05188">
    <property type="entry name" value="MutS_II"/>
    <property type="match status" value="1"/>
</dbReference>
<dbReference type="Pfam" id="PF05192">
    <property type="entry name" value="MutS_III"/>
    <property type="match status" value="1"/>
</dbReference>
<dbReference type="Pfam" id="PF05190">
    <property type="entry name" value="MutS_IV"/>
    <property type="match status" value="1"/>
</dbReference>
<dbReference type="Pfam" id="PF00488">
    <property type="entry name" value="MutS_V"/>
    <property type="match status" value="1"/>
</dbReference>
<dbReference type="PIRSF" id="PIRSF037677">
    <property type="entry name" value="DNA_mis_repair_Msh6"/>
    <property type="match status" value="1"/>
</dbReference>
<dbReference type="SMART" id="SM00534">
    <property type="entry name" value="MUTSac"/>
    <property type="match status" value="1"/>
</dbReference>
<dbReference type="SMART" id="SM00533">
    <property type="entry name" value="MUTSd"/>
    <property type="match status" value="1"/>
</dbReference>
<dbReference type="SUPFAM" id="SSF55271">
    <property type="entry name" value="DNA repair protein MutS, domain I"/>
    <property type="match status" value="1"/>
</dbReference>
<dbReference type="SUPFAM" id="SSF53150">
    <property type="entry name" value="DNA repair protein MutS, domain II"/>
    <property type="match status" value="1"/>
</dbReference>
<dbReference type="SUPFAM" id="SSF48334">
    <property type="entry name" value="DNA repair protein MutS, domain III"/>
    <property type="match status" value="1"/>
</dbReference>
<dbReference type="SUPFAM" id="SSF52540">
    <property type="entry name" value="P-loop containing nucleoside triphosphate hydrolases"/>
    <property type="match status" value="1"/>
</dbReference>
<dbReference type="PROSITE" id="PS00486">
    <property type="entry name" value="DNA_MISMATCH_REPAIR_2"/>
    <property type="match status" value="1"/>
</dbReference>
<organism>
    <name type="scientific">Ralstonia pickettii (strain 12J)</name>
    <dbReference type="NCBI Taxonomy" id="402626"/>
    <lineage>
        <taxon>Bacteria</taxon>
        <taxon>Pseudomonadati</taxon>
        <taxon>Pseudomonadota</taxon>
        <taxon>Betaproteobacteria</taxon>
        <taxon>Burkholderiales</taxon>
        <taxon>Burkholderiaceae</taxon>
        <taxon>Ralstonia</taxon>
    </lineage>
</organism>
<feature type="chain" id="PRO_1000093639" description="DNA mismatch repair protein MutS">
    <location>
        <begin position="1"/>
        <end position="882"/>
    </location>
</feature>
<feature type="binding site" evidence="1">
    <location>
        <begin position="629"/>
        <end position="636"/>
    </location>
    <ligand>
        <name>ATP</name>
        <dbReference type="ChEBI" id="CHEBI:30616"/>
    </ligand>
</feature>
<reference key="1">
    <citation type="submission" date="2008-05" db="EMBL/GenBank/DDBJ databases">
        <title>Complete sequence of chromosome 1 of Ralstonia pickettii 12J.</title>
        <authorList>
            <person name="Lucas S."/>
            <person name="Copeland A."/>
            <person name="Lapidus A."/>
            <person name="Glavina del Rio T."/>
            <person name="Dalin E."/>
            <person name="Tice H."/>
            <person name="Bruce D."/>
            <person name="Goodwin L."/>
            <person name="Pitluck S."/>
            <person name="Meincke L."/>
            <person name="Brettin T."/>
            <person name="Detter J.C."/>
            <person name="Han C."/>
            <person name="Kuske C.R."/>
            <person name="Schmutz J."/>
            <person name="Larimer F."/>
            <person name="Land M."/>
            <person name="Hauser L."/>
            <person name="Kyrpides N."/>
            <person name="Mikhailova N."/>
            <person name="Marsh T."/>
            <person name="Richardson P."/>
        </authorList>
    </citation>
    <scope>NUCLEOTIDE SEQUENCE [LARGE SCALE GENOMIC DNA]</scope>
    <source>
        <strain>12J</strain>
    </source>
</reference>